<proteinExistence type="evidence at protein level"/>
<name>AKT3_HUMAN</name>
<accession>Q9Y243</accession>
<accession>Q0VAA6</accession>
<accession>Q5VTI1</accession>
<accession>Q5VTI2</accession>
<accession>Q96QV3</accession>
<accession>Q9UFP5</accession>
<evidence type="ECO:0000250" key="1"/>
<evidence type="ECO:0000250" key="2">
    <source>
        <dbReference type="UniProtKB" id="P31749"/>
    </source>
</evidence>
<evidence type="ECO:0000250" key="3">
    <source>
        <dbReference type="UniProtKB" id="P31750"/>
    </source>
</evidence>
<evidence type="ECO:0000250" key="4">
    <source>
        <dbReference type="UniProtKB" id="P31751"/>
    </source>
</evidence>
<evidence type="ECO:0000250" key="5">
    <source>
        <dbReference type="UniProtKB" id="Q60823"/>
    </source>
</evidence>
<evidence type="ECO:0000250" key="6">
    <source>
        <dbReference type="UniProtKB" id="Q9WUA6"/>
    </source>
</evidence>
<evidence type="ECO:0000255" key="7">
    <source>
        <dbReference type="PROSITE-ProRule" id="PRU00145"/>
    </source>
</evidence>
<evidence type="ECO:0000255" key="8">
    <source>
        <dbReference type="PROSITE-ProRule" id="PRU00159"/>
    </source>
</evidence>
<evidence type="ECO:0000255" key="9">
    <source>
        <dbReference type="PROSITE-ProRule" id="PRU00618"/>
    </source>
</evidence>
<evidence type="ECO:0000255" key="10">
    <source>
        <dbReference type="PROSITE-ProRule" id="PRU10027"/>
    </source>
</evidence>
<evidence type="ECO:0000256" key="11">
    <source>
        <dbReference type="SAM" id="MobiDB-lite"/>
    </source>
</evidence>
<evidence type="ECO:0000269" key="12">
    <source>
    </source>
</evidence>
<evidence type="ECO:0000269" key="13">
    <source>
    </source>
</evidence>
<evidence type="ECO:0000269" key="14">
    <source>
    </source>
</evidence>
<evidence type="ECO:0000269" key="15">
    <source>
    </source>
</evidence>
<evidence type="ECO:0000269" key="16">
    <source>
    </source>
</evidence>
<evidence type="ECO:0000269" key="17">
    <source>
    </source>
</evidence>
<evidence type="ECO:0000269" key="18">
    <source>
    </source>
</evidence>
<evidence type="ECO:0000269" key="19">
    <source>
    </source>
</evidence>
<evidence type="ECO:0000269" key="20">
    <source>
    </source>
</evidence>
<evidence type="ECO:0000269" key="21">
    <source>
    </source>
</evidence>
<evidence type="ECO:0000269" key="22">
    <source>
    </source>
</evidence>
<evidence type="ECO:0000269" key="23">
    <source>
    </source>
</evidence>
<evidence type="ECO:0000269" key="24">
    <source>
    </source>
</evidence>
<evidence type="ECO:0000269" key="25">
    <source>
    </source>
</evidence>
<evidence type="ECO:0000269" key="26">
    <source>
    </source>
</evidence>
<evidence type="ECO:0000269" key="27">
    <source>
    </source>
</evidence>
<evidence type="ECO:0000269" key="28">
    <source>
    </source>
</evidence>
<evidence type="ECO:0000269" key="29">
    <source>
    </source>
</evidence>
<evidence type="ECO:0000303" key="30">
    <source>
    </source>
</evidence>
<evidence type="ECO:0000303" key="31">
    <source>
    </source>
</evidence>
<evidence type="ECO:0000303" key="32">
    <source>
    </source>
</evidence>
<evidence type="ECO:0000305" key="33"/>
<evidence type="ECO:0007744" key="34">
    <source>
    </source>
</evidence>
<evidence type="ECO:0007744" key="35">
    <source>
    </source>
</evidence>
<evidence type="ECO:0007829" key="36">
    <source>
        <dbReference type="PDB" id="2X18"/>
    </source>
</evidence>
<evidence type="ECO:0007829" key="37">
    <source>
        <dbReference type="PDB" id="8ZXW"/>
    </source>
</evidence>
<gene>
    <name type="primary">AKT3</name>
    <name type="synonym">PKBG</name>
</gene>
<protein>
    <recommendedName>
        <fullName>RAC-gamma serine/threonine-protein kinase</fullName>
        <ecNumber>2.7.11.1</ecNumber>
    </recommendedName>
    <alternativeName>
        <fullName>Protein kinase Akt-3</fullName>
    </alternativeName>
    <alternativeName>
        <fullName>Protein kinase B gamma</fullName>
        <shortName>PKB gamma</shortName>
    </alternativeName>
    <alternativeName>
        <fullName>RAC-PK-gamma</fullName>
    </alternativeName>
    <alternativeName>
        <fullName>STK-2</fullName>
    </alternativeName>
</protein>
<sequence length="479" mass="55775">MSDVTIVKEGWVQKRGEYIKNWRPRYFLLKTDGSFIGYKEKPQDVDLPYPLNNFSVAKCQLMKTERPKPNTFIIRCLQWTTVIERTFHVDTPEEREEWTEAIQAVADRLQRQEEERMNCSPTSQIDNIGEEEMDASTTHHKRKTMNDFDYLKLLGKGTFGKVILVREKASGKYYAMKILKKEVIIAKDEVAHTLTESRVLKNTRHPFLTSLKYSFQTKDRLCFVMEYVNGGELFFHLSRERVFSEDRTRFYGAEIVSALDYLHSGKIVYRDLKLENLMLDKDGHIKITDFGLCKEGITDAATMKTFCGTPEYLAPEVLEDNDYGRAVDWWGLGVVMYEMMCGRLPFYNQDHEKLFELILMEDIKFPRTLSSDAKSLLSGLLIKDPNKRLGGGPDDAKEIMRHSFFSGVNWQDVYDKKLVPPFKPQVTSETDTRYFDEEFTAQTITITPPEKYDEDGMDCMDNERRPHFPQFSYSASGRE</sequence>
<dbReference type="EC" id="2.7.11.1"/>
<dbReference type="EMBL" id="AF124141">
    <property type="protein sequence ID" value="AAD29089.1"/>
    <property type="molecule type" value="mRNA"/>
</dbReference>
<dbReference type="EMBL" id="AF135794">
    <property type="protein sequence ID" value="AAD24196.1"/>
    <property type="molecule type" value="mRNA"/>
</dbReference>
<dbReference type="EMBL" id="AF085234">
    <property type="protein sequence ID" value="AAL40392.1"/>
    <property type="molecule type" value="mRNA"/>
</dbReference>
<dbReference type="EMBL" id="AJ245709">
    <property type="protein sequence ID" value="CAB53537.1"/>
    <property type="molecule type" value="mRNA"/>
</dbReference>
<dbReference type="EMBL" id="AL117525">
    <property type="protein sequence ID" value="CAB55977.1"/>
    <property type="status" value="ALT_TERM"/>
    <property type="molecule type" value="mRNA"/>
</dbReference>
<dbReference type="EMBL" id="AY005799">
    <property type="protein sequence ID" value="AAF91073.1"/>
    <property type="molecule type" value="mRNA"/>
</dbReference>
<dbReference type="EMBL" id="AC096539">
    <property type="status" value="NOT_ANNOTATED_CDS"/>
    <property type="molecule type" value="Genomic_DNA"/>
</dbReference>
<dbReference type="EMBL" id="AL591721">
    <property type="status" value="NOT_ANNOTATED_CDS"/>
    <property type="molecule type" value="Genomic_DNA"/>
</dbReference>
<dbReference type="EMBL" id="AL592151">
    <property type="status" value="NOT_ANNOTATED_CDS"/>
    <property type="molecule type" value="Genomic_DNA"/>
</dbReference>
<dbReference type="EMBL" id="AL662889">
    <property type="status" value="NOT_ANNOTATED_CDS"/>
    <property type="molecule type" value="Genomic_DNA"/>
</dbReference>
<dbReference type="EMBL" id="CH471148">
    <property type="protein sequence ID" value="EAW77093.1"/>
    <property type="molecule type" value="Genomic_DNA"/>
</dbReference>
<dbReference type="EMBL" id="CH471148">
    <property type="protein sequence ID" value="EAW77094.1"/>
    <property type="molecule type" value="Genomic_DNA"/>
</dbReference>
<dbReference type="EMBL" id="BC121154">
    <property type="protein sequence ID" value="AAI21155.1"/>
    <property type="molecule type" value="mRNA"/>
</dbReference>
<dbReference type="CCDS" id="CCDS31076.1">
    <molecule id="Q9Y243-2"/>
</dbReference>
<dbReference type="CCDS" id="CCDS31077.1">
    <molecule id="Q9Y243-1"/>
</dbReference>
<dbReference type="PIR" id="A59380">
    <property type="entry name" value="A59380"/>
</dbReference>
<dbReference type="PIR" id="T17287">
    <property type="entry name" value="T17287"/>
</dbReference>
<dbReference type="RefSeq" id="NP_001193658.1">
    <molecule id="Q9Y243-2"/>
    <property type="nucleotide sequence ID" value="NM_001206729.2"/>
</dbReference>
<dbReference type="RefSeq" id="NP_001357003.1">
    <molecule id="Q9Y243-1"/>
    <property type="nucleotide sequence ID" value="NM_001370074.1"/>
</dbReference>
<dbReference type="RefSeq" id="NP_005456.1">
    <molecule id="Q9Y243-1"/>
    <property type="nucleotide sequence ID" value="NM_005465.7"/>
</dbReference>
<dbReference type="RefSeq" id="NP_859029.1">
    <molecule id="Q9Y243-2"/>
    <property type="nucleotide sequence ID" value="NM_181690.2"/>
</dbReference>
<dbReference type="RefSeq" id="XP_005273051.1">
    <property type="nucleotide sequence ID" value="XM_005272994.4"/>
</dbReference>
<dbReference type="RefSeq" id="XP_005273052.1">
    <property type="nucleotide sequence ID" value="XM_005272995.2"/>
</dbReference>
<dbReference type="RefSeq" id="XP_054184598.1">
    <molecule id="Q9Y243-1"/>
    <property type="nucleotide sequence ID" value="XM_054328623.1"/>
</dbReference>
<dbReference type="RefSeq" id="XP_054189659.1">
    <molecule id="Q9Y243-1"/>
    <property type="nucleotide sequence ID" value="XM_054333684.1"/>
</dbReference>
<dbReference type="PDB" id="2X18">
    <property type="method" value="X-ray"/>
    <property type="resolution" value="1.46 A"/>
    <property type="chains" value="A/B/C/D/E/F/G/H=1-118"/>
</dbReference>
<dbReference type="PDB" id="8ZXW">
    <property type="method" value="X-ray"/>
    <property type="resolution" value="1.33 A"/>
    <property type="chains" value="C/D=465-476"/>
</dbReference>
<dbReference type="PDBsum" id="2X18"/>
<dbReference type="PDBsum" id="8ZXW"/>
<dbReference type="SMR" id="Q9Y243"/>
<dbReference type="BioGRID" id="115318">
    <property type="interactions" value="82"/>
</dbReference>
<dbReference type="CORUM" id="Q9Y243"/>
<dbReference type="DIP" id="DIP-32584N"/>
<dbReference type="FunCoup" id="Q9Y243">
    <property type="interactions" value="2649"/>
</dbReference>
<dbReference type="IntAct" id="Q9Y243">
    <property type="interactions" value="57"/>
</dbReference>
<dbReference type="MINT" id="Q9Y243"/>
<dbReference type="STRING" id="9606.ENSP00000500582"/>
<dbReference type="BindingDB" id="Q9Y243"/>
<dbReference type="ChEMBL" id="CHEMBL4816"/>
<dbReference type="DrugBank" id="DB12218">
    <property type="generic name" value="Capivasertib"/>
</dbReference>
<dbReference type="DrugBank" id="DB12745">
    <property type="generic name" value="GSK-690693"/>
</dbReference>
<dbReference type="DrugBank" id="DB15431">
    <property type="generic name" value="M-2698"/>
</dbReference>
<dbReference type="DrugBank" id="DB14982">
    <property type="generic name" value="Miransertib"/>
</dbReference>
<dbReference type="DrugBank" id="DB16828">
    <property type="generic name" value="MK-2206"/>
</dbReference>
<dbReference type="DrugBank" id="DB14636">
    <property type="generic name" value="Triciribine phosphate"/>
</dbReference>
<dbReference type="DrugBank" id="DB11969">
    <property type="generic name" value="Uprosertib"/>
</dbReference>
<dbReference type="DrugCentral" id="Q9Y243"/>
<dbReference type="GuidetoPHARMACOLOGY" id="2286"/>
<dbReference type="GlyCosmos" id="Q9Y243">
    <property type="glycosylation" value="2 sites, No reported glycans"/>
</dbReference>
<dbReference type="GlyGen" id="Q9Y243">
    <property type="glycosylation" value="3 sites, 1 O-linked glycan (1 site)"/>
</dbReference>
<dbReference type="iPTMnet" id="Q9Y243"/>
<dbReference type="PhosphoSitePlus" id="Q9Y243"/>
<dbReference type="BioMuta" id="AKT3"/>
<dbReference type="DMDM" id="12643943"/>
<dbReference type="CPTAC" id="CPTAC-2979"/>
<dbReference type="CPTAC" id="CPTAC-2980"/>
<dbReference type="CPTAC" id="CPTAC-2981"/>
<dbReference type="CPTAC" id="CPTAC-2982"/>
<dbReference type="CPTAC" id="CPTAC-5742"/>
<dbReference type="CPTAC" id="CPTAC-5786"/>
<dbReference type="CPTAC" id="CPTAC-5787"/>
<dbReference type="CPTAC" id="CPTAC-5788"/>
<dbReference type="CPTAC" id="CPTAC-5789"/>
<dbReference type="CPTAC" id="non-CPTAC-5340"/>
<dbReference type="CPTAC" id="non-CPTAC-5342"/>
<dbReference type="CPTAC" id="non-CPTAC-5344"/>
<dbReference type="CPTAC" id="non-CPTAC-5345"/>
<dbReference type="CPTAC" id="non-CPTAC-5530"/>
<dbReference type="CPTAC" id="non-CPTAC-5531"/>
<dbReference type="CPTAC" id="non-CPTAC-5692"/>
<dbReference type="CPTAC" id="non-CPTAC-5693"/>
<dbReference type="jPOST" id="Q9Y243"/>
<dbReference type="MassIVE" id="Q9Y243"/>
<dbReference type="PaxDb" id="9606-ENSP00000263826"/>
<dbReference type="PeptideAtlas" id="Q9Y243"/>
<dbReference type="ProteomicsDB" id="85641">
    <molecule id="Q9Y243-1"/>
</dbReference>
<dbReference type="ProteomicsDB" id="85642">
    <molecule id="Q9Y243-2"/>
</dbReference>
<dbReference type="Pumba" id="Q9Y243"/>
<dbReference type="ABCD" id="Q9Y243">
    <property type="antibodies" value="3 sequenced antibodies"/>
</dbReference>
<dbReference type="Antibodypedia" id="3402">
    <property type="antibodies" value="1124 antibodies from 45 providers"/>
</dbReference>
<dbReference type="CPTC" id="Q9Y243">
    <property type="antibodies" value="7 antibodies"/>
</dbReference>
<dbReference type="DNASU" id="10000"/>
<dbReference type="Ensembl" id="ENST00000263826.12">
    <molecule id="Q9Y243-1"/>
    <property type="protein sequence ID" value="ENSP00000263826.5"/>
    <property type="gene ID" value="ENSG00000117020.19"/>
</dbReference>
<dbReference type="Ensembl" id="ENST00000336199.9">
    <molecule id="Q9Y243-2"/>
    <property type="protein sequence ID" value="ENSP00000336943.5"/>
    <property type="gene ID" value="ENSG00000117020.19"/>
</dbReference>
<dbReference type="Ensembl" id="ENST00000366540.5">
    <molecule id="Q9Y243-2"/>
    <property type="protein sequence ID" value="ENSP00000355498.1"/>
    <property type="gene ID" value="ENSG00000117020.19"/>
</dbReference>
<dbReference type="Ensembl" id="ENST00000613395.4">
    <molecule id="Q9Y243-2"/>
    <property type="protein sequence ID" value="ENSP00000479922.1"/>
    <property type="gene ID" value="ENSG00000275199.4"/>
</dbReference>
<dbReference type="Ensembl" id="ENST00000619536.4">
    <molecule id="Q9Y243-2"/>
    <property type="protein sequence ID" value="ENSP00000483054.1"/>
    <property type="gene ID" value="ENSG00000275199.4"/>
</dbReference>
<dbReference type="Ensembl" id="ENST00000621586.3">
    <molecule id="Q9Y243-1"/>
    <property type="protein sequence ID" value="ENSP00000479081.1"/>
    <property type="gene ID" value="ENSG00000275199.4"/>
</dbReference>
<dbReference type="Ensembl" id="ENST00000673466.1">
    <molecule id="Q9Y243-1"/>
    <property type="protein sequence ID" value="ENSP00000500582.1"/>
    <property type="gene ID" value="ENSG00000117020.19"/>
</dbReference>
<dbReference type="Ensembl" id="ENST00000680118.1">
    <molecule id="Q9Y243-1"/>
    <property type="protein sequence ID" value="ENSP00000505276.1"/>
    <property type="gene ID" value="ENSG00000117020.19"/>
</dbReference>
<dbReference type="GeneID" id="10000"/>
<dbReference type="KEGG" id="hsa:10000"/>
<dbReference type="MANE-Select" id="ENST00000673466.1">
    <property type="protein sequence ID" value="ENSP00000500582.1"/>
    <property type="RefSeq nucleotide sequence ID" value="NM_005465.7"/>
    <property type="RefSeq protein sequence ID" value="NP_005456.1"/>
</dbReference>
<dbReference type="UCSC" id="uc001hzz.2">
    <molecule id="Q9Y243-1"/>
    <property type="organism name" value="human"/>
</dbReference>
<dbReference type="AGR" id="HGNC:393"/>
<dbReference type="CTD" id="10000"/>
<dbReference type="DisGeNET" id="10000"/>
<dbReference type="GeneCards" id="AKT3"/>
<dbReference type="GeneReviews" id="AKT3"/>
<dbReference type="HGNC" id="HGNC:393">
    <property type="gene designation" value="AKT3"/>
</dbReference>
<dbReference type="HPA" id="ENSG00000117020">
    <property type="expression patterns" value="Low tissue specificity"/>
</dbReference>
<dbReference type="MalaCards" id="AKT3"/>
<dbReference type="MIM" id="611223">
    <property type="type" value="gene"/>
</dbReference>
<dbReference type="MIM" id="615937">
    <property type="type" value="phenotype"/>
</dbReference>
<dbReference type="neXtProt" id="NX_Q9Y243"/>
<dbReference type="OpenTargets" id="ENSG00000117020"/>
<dbReference type="Orphanet" id="99802">
    <property type="disease" value="Hemimegalencephaly"/>
</dbReference>
<dbReference type="Orphanet" id="83473">
    <property type="disease" value="Megalencephaly-polymicrogyria-postaxial polydactyly-hydrocephalus syndrome"/>
</dbReference>
<dbReference type="PharmGKB" id="PA24686"/>
<dbReference type="VEuPathDB" id="HostDB:ENSG00000117020"/>
<dbReference type="eggNOG" id="KOG0690">
    <property type="taxonomic scope" value="Eukaryota"/>
</dbReference>
<dbReference type="GeneTree" id="ENSGT00940000157060"/>
<dbReference type="HOGENOM" id="CLU_000288_11_0_1"/>
<dbReference type="InParanoid" id="Q9Y243"/>
<dbReference type="OMA" id="XLGGGPD"/>
<dbReference type="OrthoDB" id="63267at2759"/>
<dbReference type="PAN-GO" id="Q9Y243">
    <property type="GO annotations" value="3 GO annotations based on evolutionary models"/>
</dbReference>
<dbReference type="PhylomeDB" id="Q9Y243"/>
<dbReference type="TreeFam" id="TF102004"/>
<dbReference type="BRENDA" id="2.7.11.1">
    <property type="organism ID" value="2681"/>
</dbReference>
<dbReference type="PathwayCommons" id="Q9Y243"/>
<dbReference type="Reactome" id="R-HSA-111447">
    <property type="pathway name" value="Activation of BAD and translocation to mitochondria"/>
</dbReference>
<dbReference type="Reactome" id="R-HSA-1257604">
    <property type="pathway name" value="PIP3 activates AKT signaling"/>
</dbReference>
<dbReference type="Reactome" id="R-HSA-1358803">
    <property type="pathway name" value="Downregulation of ERBB2:ERBB3 signaling"/>
</dbReference>
<dbReference type="Reactome" id="R-HSA-198323">
    <property type="pathway name" value="AKT phosphorylates targets in the cytosol"/>
</dbReference>
<dbReference type="Reactome" id="R-HSA-198693">
    <property type="pathway name" value="AKT phosphorylates targets in the nucleus"/>
</dbReference>
<dbReference type="Reactome" id="R-HSA-199418">
    <property type="pathway name" value="Negative regulation of the PI3K/AKT network"/>
</dbReference>
<dbReference type="Reactome" id="R-HSA-211163">
    <property type="pathway name" value="AKT-mediated inactivation of FOXO1A"/>
</dbReference>
<dbReference type="Reactome" id="R-HSA-389357">
    <property type="pathway name" value="CD28 dependent PI3K/Akt signaling"/>
</dbReference>
<dbReference type="Reactome" id="R-HSA-389513">
    <property type="pathway name" value="Co-inhibition by CTLA4"/>
</dbReference>
<dbReference type="Reactome" id="R-HSA-392451">
    <property type="pathway name" value="G beta:gamma signalling through PI3Kgamma"/>
</dbReference>
<dbReference type="Reactome" id="R-HSA-5218920">
    <property type="pathway name" value="VEGFR2 mediated vascular permeability"/>
</dbReference>
<dbReference type="Reactome" id="R-HSA-5628897">
    <property type="pathway name" value="TP53 Regulates Metabolic Genes"/>
</dbReference>
<dbReference type="Reactome" id="R-HSA-5674400">
    <property type="pathway name" value="Constitutive Signaling by AKT1 E17K in Cancer"/>
</dbReference>
<dbReference type="Reactome" id="R-HSA-6804757">
    <property type="pathway name" value="Regulation of TP53 Degradation"/>
</dbReference>
<dbReference type="Reactome" id="R-HSA-6804758">
    <property type="pathway name" value="Regulation of TP53 Activity through Acetylation"/>
</dbReference>
<dbReference type="Reactome" id="R-HSA-6804759">
    <property type="pathway name" value="Regulation of TP53 Activity through Association with Co-factors"/>
</dbReference>
<dbReference type="Reactome" id="R-HSA-69202">
    <property type="pathway name" value="Cyclin E associated events during G1/S transition"/>
</dbReference>
<dbReference type="Reactome" id="R-HSA-69656">
    <property type="pathway name" value="Cyclin A:Cdk2-associated events at S phase entry"/>
</dbReference>
<dbReference type="Reactome" id="R-HSA-8876198">
    <property type="pathway name" value="RAB GEFs exchange GTP for GDP on RABs"/>
</dbReference>
<dbReference type="Reactome" id="R-HSA-8941332">
    <property type="pathway name" value="RUNX2 regulates genes involved in cell migration"/>
</dbReference>
<dbReference type="Reactome" id="R-HSA-8948751">
    <property type="pathway name" value="Regulation of PTEN stability and activity"/>
</dbReference>
<dbReference type="Reactome" id="R-HSA-9607240">
    <property type="pathway name" value="FLT3 Signaling"/>
</dbReference>
<dbReference type="Reactome" id="R-HSA-9614399">
    <property type="pathway name" value="Regulation of localization of FOXO transcription factors"/>
</dbReference>
<dbReference type="Reactome" id="R-HSA-9634638">
    <property type="pathway name" value="Estrogen-dependent nuclear events downstream of ESR-membrane signaling"/>
</dbReference>
<dbReference type="Reactome" id="R-HSA-9755511">
    <property type="pathway name" value="KEAP1-NFE2L2 pathway"/>
</dbReference>
<dbReference type="Reactome" id="R-HSA-9755779">
    <property type="pathway name" value="SARS-CoV-2 targets host intracellular signalling and regulatory pathways"/>
</dbReference>
<dbReference type="Reactome" id="R-HSA-9856649">
    <property type="pathway name" value="Transcriptional and post-translational regulation of MITF-M expression and activity"/>
</dbReference>
<dbReference type="SABIO-RK" id="Q9Y243"/>
<dbReference type="SignaLink" id="Q9Y243"/>
<dbReference type="SIGNOR" id="Q9Y243"/>
<dbReference type="BioGRID-ORCS" id="10000">
    <property type="hits" value="14 hits in 1204 CRISPR screens"/>
</dbReference>
<dbReference type="ChiTaRS" id="AKT3">
    <property type="organism name" value="human"/>
</dbReference>
<dbReference type="EvolutionaryTrace" id="Q9Y243"/>
<dbReference type="GeneWiki" id="AKT3"/>
<dbReference type="GenomeRNAi" id="10000"/>
<dbReference type="Pharos" id="Q9Y243">
    <property type="development level" value="Tchem"/>
</dbReference>
<dbReference type="PRO" id="PR:Q9Y243"/>
<dbReference type="Proteomes" id="UP000005640">
    <property type="component" value="Chromosome 1"/>
</dbReference>
<dbReference type="RNAct" id="Q9Y243">
    <property type="molecule type" value="protein"/>
</dbReference>
<dbReference type="Bgee" id="ENSG00000117020">
    <property type="expression patterns" value="Expressed in cortical plate and 158 other cell types or tissues"/>
</dbReference>
<dbReference type="ExpressionAtlas" id="Q9Y243">
    <property type="expression patterns" value="baseline and differential"/>
</dbReference>
<dbReference type="GO" id="GO:0036064">
    <property type="term" value="C:ciliary basal body"/>
    <property type="evidence" value="ECO:0000314"/>
    <property type="project" value="HPA"/>
</dbReference>
<dbReference type="GO" id="GO:0005929">
    <property type="term" value="C:cilium"/>
    <property type="evidence" value="ECO:0000314"/>
    <property type="project" value="HPA"/>
</dbReference>
<dbReference type="GO" id="GO:0005829">
    <property type="term" value="C:cytosol"/>
    <property type="evidence" value="ECO:0000314"/>
    <property type="project" value="HPA"/>
</dbReference>
<dbReference type="GO" id="GO:0005794">
    <property type="term" value="C:Golgi apparatus"/>
    <property type="evidence" value="ECO:0000314"/>
    <property type="project" value="HPA"/>
</dbReference>
<dbReference type="GO" id="GO:0005654">
    <property type="term" value="C:nucleoplasm"/>
    <property type="evidence" value="ECO:0000314"/>
    <property type="project" value="HPA"/>
</dbReference>
<dbReference type="GO" id="GO:0005886">
    <property type="term" value="C:plasma membrane"/>
    <property type="evidence" value="ECO:0000314"/>
    <property type="project" value="HPA"/>
</dbReference>
<dbReference type="GO" id="GO:0005524">
    <property type="term" value="F:ATP binding"/>
    <property type="evidence" value="ECO:0000314"/>
    <property type="project" value="UniProtKB"/>
</dbReference>
<dbReference type="GO" id="GO:0004672">
    <property type="term" value="F:protein kinase activity"/>
    <property type="evidence" value="ECO:0000304"/>
    <property type="project" value="ProtInc"/>
</dbReference>
<dbReference type="GO" id="GO:0106310">
    <property type="term" value="F:protein serine kinase activity"/>
    <property type="evidence" value="ECO:0007669"/>
    <property type="project" value="RHEA"/>
</dbReference>
<dbReference type="GO" id="GO:0004674">
    <property type="term" value="F:protein serine/threonine kinase activity"/>
    <property type="evidence" value="ECO:0000314"/>
    <property type="project" value="UniProtKB"/>
</dbReference>
<dbReference type="GO" id="GO:0048854">
    <property type="term" value="P:brain morphogenesis"/>
    <property type="evidence" value="ECO:0007669"/>
    <property type="project" value="Ensembl"/>
</dbReference>
<dbReference type="GO" id="GO:0048873">
    <property type="term" value="P:homeostasis of number of cells within a tissue"/>
    <property type="evidence" value="ECO:0007669"/>
    <property type="project" value="Ensembl"/>
</dbReference>
<dbReference type="GO" id="GO:0035556">
    <property type="term" value="P:intracellular signal transduction"/>
    <property type="evidence" value="ECO:0000318"/>
    <property type="project" value="GO_Central"/>
</dbReference>
<dbReference type="GO" id="GO:0000002">
    <property type="term" value="P:mitochondrial genome maintenance"/>
    <property type="evidence" value="ECO:0000315"/>
    <property type="project" value="UniProtKB"/>
</dbReference>
<dbReference type="GO" id="GO:2000773">
    <property type="term" value="P:negative regulation of cellular senescence"/>
    <property type="evidence" value="ECO:0000315"/>
    <property type="project" value="BHF-UCL"/>
</dbReference>
<dbReference type="GO" id="GO:1903898">
    <property type="term" value="P:negative regulation of PERK-mediated unfolded protein response"/>
    <property type="evidence" value="ECO:0007669"/>
    <property type="project" value="Ensembl"/>
</dbReference>
<dbReference type="GO" id="GO:0045766">
    <property type="term" value="P:positive regulation of angiogenesis"/>
    <property type="evidence" value="ECO:0007669"/>
    <property type="project" value="Ensembl"/>
</dbReference>
<dbReference type="GO" id="GO:1905653">
    <property type="term" value="P:positive regulation of artery morphogenesis"/>
    <property type="evidence" value="ECO:0007669"/>
    <property type="project" value="Ensembl"/>
</dbReference>
<dbReference type="GO" id="GO:0043536">
    <property type="term" value="P:positive regulation of blood vessel endothelial cell migration"/>
    <property type="evidence" value="ECO:0000314"/>
    <property type="project" value="BHF-UCL"/>
</dbReference>
<dbReference type="GO" id="GO:0090050">
    <property type="term" value="P:positive regulation of cell migration involved in sprouting angiogenesis"/>
    <property type="evidence" value="ECO:0000315"/>
    <property type="project" value="BHF-UCL"/>
</dbReference>
<dbReference type="GO" id="GO:0045793">
    <property type="term" value="P:positive regulation of cell size"/>
    <property type="evidence" value="ECO:0007669"/>
    <property type="project" value="Ensembl"/>
</dbReference>
<dbReference type="GO" id="GO:0001938">
    <property type="term" value="P:positive regulation of endothelial cell proliferation"/>
    <property type="evidence" value="ECO:0000315"/>
    <property type="project" value="BHF-UCL"/>
</dbReference>
<dbReference type="GO" id="GO:0032008">
    <property type="term" value="P:positive regulation of TOR signaling"/>
    <property type="evidence" value="ECO:0007669"/>
    <property type="project" value="Ensembl"/>
</dbReference>
<dbReference type="GO" id="GO:1905564">
    <property type="term" value="P:positive regulation of vascular endothelial cell proliferation"/>
    <property type="evidence" value="ECO:0000314"/>
    <property type="project" value="BHF-UCL"/>
</dbReference>
<dbReference type="GO" id="GO:0006468">
    <property type="term" value="P:protein phosphorylation"/>
    <property type="evidence" value="ECO:0000304"/>
    <property type="project" value="ProtInc"/>
</dbReference>
<dbReference type="GO" id="GO:0007165">
    <property type="term" value="P:signal transduction"/>
    <property type="evidence" value="ECO:0000315"/>
    <property type="project" value="UniProtKB"/>
</dbReference>
<dbReference type="CDD" id="cd01241">
    <property type="entry name" value="PH_PKB"/>
    <property type="match status" value="1"/>
</dbReference>
<dbReference type="CDD" id="cd05593">
    <property type="entry name" value="STKc_PKB_gamma"/>
    <property type="match status" value="1"/>
</dbReference>
<dbReference type="FunFam" id="1.10.510.10:FF:000033">
    <property type="entry name" value="Non-specific serine/threonine protein kinase"/>
    <property type="match status" value="1"/>
</dbReference>
<dbReference type="FunFam" id="2.30.29.30:FF:000027">
    <property type="entry name" value="Non-specific serine/threonine protein kinase"/>
    <property type="match status" value="1"/>
</dbReference>
<dbReference type="FunFam" id="3.30.200.20:FF:000838">
    <property type="entry name" value="Non-specific serine/threonine protein kinase"/>
    <property type="match status" value="1"/>
</dbReference>
<dbReference type="Gene3D" id="3.30.200.20">
    <property type="entry name" value="Phosphorylase Kinase, domain 1"/>
    <property type="match status" value="1"/>
</dbReference>
<dbReference type="Gene3D" id="2.30.29.30">
    <property type="entry name" value="Pleckstrin-homology domain (PH domain)/Phosphotyrosine-binding domain (PTB)"/>
    <property type="match status" value="1"/>
</dbReference>
<dbReference type="Gene3D" id="1.10.510.10">
    <property type="entry name" value="Transferase(Phosphotransferase) domain 1"/>
    <property type="match status" value="1"/>
</dbReference>
<dbReference type="InterPro" id="IPR000961">
    <property type="entry name" value="AGC-kinase_C"/>
</dbReference>
<dbReference type="InterPro" id="IPR034675">
    <property type="entry name" value="Akt3"/>
</dbReference>
<dbReference type="InterPro" id="IPR011009">
    <property type="entry name" value="Kinase-like_dom_sf"/>
</dbReference>
<dbReference type="InterPro" id="IPR011993">
    <property type="entry name" value="PH-like_dom_sf"/>
</dbReference>
<dbReference type="InterPro" id="IPR001849">
    <property type="entry name" value="PH_domain"/>
</dbReference>
<dbReference type="InterPro" id="IPR039026">
    <property type="entry name" value="PH_PKB"/>
</dbReference>
<dbReference type="InterPro" id="IPR017892">
    <property type="entry name" value="Pkinase_C"/>
</dbReference>
<dbReference type="InterPro" id="IPR000719">
    <property type="entry name" value="Prot_kinase_dom"/>
</dbReference>
<dbReference type="InterPro" id="IPR017441">
    <property type="entry name" value="Protein_kinase_ATP_BS"/>
</dbReference>
<dbReference type="InterPro" id="IPR008271">
    <property type="entry name" value="Ser/Thr_kinase_AS"/>
</dbReference>
<dbReference type="PANTHER" id="PTHR24351">
    <property type="entry name" value="RIBOSOMAL PROTEIN S6 KINASE"/>
    <property type="match status" value="1"/>
</dbReference>
<dbReference type="Pfam" id="PF00169">
    <property type="entry name" value="PH"/>
    <property type="match status" value="1"/>
</dbReference>
<dbReference type="Pfam" id="PF00069">
    <property type="entry name" value="Pkinase"/>
    <property type="match status" value="1"/>
</dbReference>
<dbReference type="Pfam" id="PF00433">
    <property type="entry name" value="Pkinase_C"/>
    <property type="match status" value="1"/>
</dbReference>
<dbReference type="SMART" id="SM00233">
    <property type="entry name" value="PH"/>
    <property type="match status" value="1"/>
</dbReference>
<dbReference type="SMART" id="SM00133">
    <property type="entry name" value="S_TK_X"/>
    <property type="match status" value="1"/>
</dbReference>
<dbReference type="SMART" id="SM00220">
    <property type="entry name" value="S_TKc"/>
    <property type="match status" value="1"/>
</dbReference>
<dbReference type="SUPFAM" id="SSF50729">
    <property type="entry name" value="PH domain-like"/>
    <property type="match status" value="1"/>
</dbReference>
<dbReference type="SUPFAM" id="SSF56112">
    <property type="entry name" value="Protein kinase-like (PK-like)"/>
    <property type="match status" value="1"/>
</dbReference>
<dbReference type="PROSITE" id="PS51285">
    <property type="entry name" value="AGC_KINASE_CTER"/>
    <property type="match status" value="1"/>
</dbReference>
<dbReference type="PROSITE" id="PS50003">
    <property type="entry name" value="PH_DOMAIN"/>
    <property type="match status" value="1"/>
</dbReference>
<dbReference type="PROSITE" id="PS00107">
    <property type="entry name" value="PROTEIN_KINASE_ATP"/>
    <property type="match status" value="1"/>
</dbReference>
<dbReference type="PROSITE" id="PS50011">
    <property type="entry name" value="PROTEIN_KINASE_DOM"/>
    <property type="match status" value="1"/>
</dbReference>
<dbReference type="PROSITE" id="PS00108">
    <property type="entry name" value="PROTEIN_KINASE_ST"/>
    <property type="match status" value="1"/>
</dbReference>
<reference key="1">
    <citation type="journal article" date="1999" name="J. Biol. Chem.">
        <title>A human protein kinase B gamma with regulatory phosphorylation sites in the activation loop and in the C-terminal hydrophobic domain.</title>
        <authorList>
            <person name="Brodbeck D."/>
            <person name="Cron P."/>
            <person name="Hemmings B.A."/>
        </authorList>
    </citation>
    <scope>NUCLEOTIDE SEQUENCE [MRNA]</scope>
    <scope>MUTAGENESIS</scope>
</reference>
<reference key="2">
    <citation type="journal article" date="1999" name="Biochem. Biophys. Res. Commun.">
        <title>Identification of a human Akt3 (protein kinase B gamma) which contains the regulatory serine phosphorylation site.</title>
        <authorList>
            <person name="Nakatani K."/>
            <person name="Sakaue H."/>
            <person name="Thompson D.A."/>
            <person name="Weigel R.J."/>
            <person name="Roth R.A."/>
        </authorList>
    </citation>
    <scope>NUCLEOTIDE SEQUENCE [MRNA]</scope>
</reference>
<reference key="3">
    <citation type="journal article" date="1999" name="Eur. J. Biochem.">
        <title>Molecular cloning, expression and characterization of the human serine/threonine kinase Akt-3.</title>
        <authorList>
            <person name="Masure S."/>
            <person name="Haefner B."/>
            <person name="Wesselink J.-J."/>
            <person name="Hoefnagel E."/>
            <person name="Mortier E."/>
            <person name="Verhasselt P."/>
            <person name="Tuytelaars A."/>
            <person name="Gordon R."/>
            <person name="Richardson A."/>
        </authorList>
    </citation>
    <scope>NUCLEOTIDE SEQUENCE [MRNA]</scope>
    <source>
        <tissue>Brain</tissue>
    </source>
</reference>
<reference key="4">
    <citation type="submission" date="1998-08" db="EMBL/GenBank/DDBJ databases">
        <title>Cloning of a novel human cDNA, STK-2, which encodes a rat serine-threonine protein kinase (STK) homolog.</title>
        <authorList>
            <person name="Li X."/>
            <person name="Yu L."/>
            <person name="Huang H."/>
            <person name="Zhang M."/>
            <person name="Zhao Y."/>
            <person name="Zhao S."/>
        </authorList>
    </citation>
    <scope>NUCLEOTIDE SEQUENCE [MRNA] (ISOFORM 1)</scope>
</reference>
<reference key="5">
    <citation type="journal article" date="2001" name="Genome Res.">
        <title>Towards a catalog of human genes and proteins: sequencing and analysis of 500 novel complete protein coding human cDNAs.</title>
        <authorList>
            <person name="Wiemann S."/>
            <person name="Weil B."/>
            <person name="Wellenreuther R."/>
            <person name="Gassenhuber J."/>
            <person name="Glassl S."/>
            <person name="Ansorge W."/>
            <person name="Boecher M."/>
            <person name="Bloecker H."/>
            <person name="Bauersachs S."/>
            <person name="Blum H."/>
            <person name="Lauber J."/>
            <person name="Duesterhoeft A."/>
            <person name="Beyer A."/>
            <person name="Koehrer K."/>
            <person name="Strack N."/>
            <person name="Mewes H.-W."/>
            <person name="Ottenwaelder B."/>
            <person name="Obermaier B."/>
            <person name="Tampe J."/>
            <person name="Heubner D."/>
            <person name="Wambutt R."/>
            <person name="Korn B."/>
            <person name="Klein M."/>
            <person name="Poustka A."/>
        </authorList>
    </citation>
    <scope>NUCLEOTIDE SEQUENCE [LARGE SCALE MRNA] (ISOFORM 2)</scope>
    <source>
        <tissue>Testis</tissue>
    </source>
</reference>
<reference key="6">
    <citation type="journal article" date="2001" name="J. Biol. Chem.">
        <title>Two splice variants of PKB gamma have different regulatory capacity depending on the presence or absence of the regulatory phosphorylation site Ser-472 in the C-terminal hydrophobic domain.</title>
        <authorList>
            <person name="Brodbeck D."/>
            <person name="Hill M.M."/>
            <person name="Hemmings B.A."/>
        </authorList>
    </citation>
    <scope>NUCLEOTIDE SEQUENCE [MRNA] (ISOFORMS 1 AND 2)</scope>
    <scope>MUTAGENESIS OF THR-305 AND THR-447</scope>
</reference>
<reference key="7">
    <citation type="journal article" date="2006" name="Nature">
        <title>The DNA sequence and biological annotation of human chromosome 1.</title>
        <authorList>
            <person name="Gregory S.G."/>
            <person name="Barlow K.F."/>
            <person name="McLay K.E."/>
            <person name="Kaul R."/>
            <person name="Swarbreck D."/>
            <person name="Dunham A."/>
            <person name="Scott C.E."/>
            <person name="Howe K.L."/>
            <person name="Woodfine K."/>
            <person name="Spencer C.C.A."/>
            <person name="Jones M.C."/>
            <person name="Gillson C."/>
            <person name="Searle S."/>
            <person name="Zhou Y."/>
            <person name="Kokocinski F."/>
            <person name="McDonald L."/>
            <person name="Evans R."/>
            <person name="Phillips K."/>
            <person name="Atkinson A."/>
            <person name="Cooper R."/>
            <person name="Jones C."/>
            <person name="Hall R.E."/>
            <person name="Andrews T.D."/>
            <person name="Lloyd C."/>
            <person name="Ainscough R."/>
            <person name="Almeida J.P."/>
            <person name="Ambrose K.D."/>
            <person name="Anderson F."/>
            <person name="Andrew R.W."/>
            <person name="Ashwell R.I.S."/>
            <person name="Aubin K."/>
            <person name="Babbage A.K."/>
            <person name="Bagguley C.L."/>
            <person name="Bailey J."/>
            <person name="Beasley H."/>
            <person name="Bethel G."/>
            <person name="Bird C.P."/>
            <person name="Bray-Allen S."/>
            <person name="Brown J.Y."/>
            <person name="Brown A.J."/>
            <person name="Buckley D."/>
            <person name="Burton J."/>
            <person name="Bye J."/>
            <person name="Carder C."/>
            <person name="Chapman J.C."/>
            <person name="Clark S.Y."/>
            <person name="Clarke G."/>
            <person name="Clee C."/>
            <person name="Cobley V."/>
            <person name="Collier R.E."/>
            <person name="Corby N."/>
            <person name="Coville G.J."/>
            <person name="Davies J."/>
            <person name="Deadman R."/>
            <person name="Dunn M."/>
            <person name="Earthrowl M."/>
            <person name="Ellington A.G."/>
            <person name="Errington H."/>
            <person name="Frankish A."/>
            <person name="Frankland J."/>
            <person name="French L."/>
            <person name="Garner P."/>
            <person name="Garnett J."/>
            <person name="Gay L."/>
            <person name="Ghori M.R.J."/>
            <person name="Gibson R."/>
            <person name="Gilby L.M."/>
            <person name="Gillett W."/>
            <person name="Glithero R.J."/>
            <person name="Grafham D.V."/>
            <person name="Griffiths C."/>
            <person name="Griffiths-Jones S."/>
            <person name="Grocock R."/>
            <person name="Hammond S."/>
            <person name="Harrison E.S.I."/>
            <person name="Hart E."/>
            <person name="Haugen E."/>
            <person name="Heath P.D."/>
            <person name="Holmes S."/>
            <person name="Holt K."/>
            <person name="Howden P.J."/>
            <person name="Hunt A.R."/>
            <person name="Hunt S.E."/>
            <person name="Hunter G."/>
            <person name="Isherwood J."/>
            <person name="James R."/>
            <person name="Johnson C."/>
            <person name="Johnson D."/>
            <person name="Joy A."/>
            <person name="Kay M."/>
            <person name="Kershaw J.K."/>
            <person name="Kibukawa M."/>
            <person name="Kimberley A.M."/>
            <person name="King A."/>
            <person name="Knights A.J."/>
            <person name="Lad H."/>
            <person name="Laird G."/>
            <person name="Lawlor S."/>
            <person name="Leongamornlert D.A."/>
            <person name="Lloyd D.M."/>
            <person name="Loveland J."/>
            <person name="Lovell J."/>
            <person name="Lush M.J."/>
            <person name="Lyne R."/>
            <person name="Martin S."/>
            <person name="Mashreghi-Mohammadi M."/>
            <person name="Matthews L."/>
            <person name="Matthews N.S.W."/>
            <person name="McLaren S."/>
            <person name="Milne S."/>
            <person name="Mistry S."/>
            <person name="Moore M.J.F."/>
            <person name="Nickerson T."/>
            <person name="O'Dell C.N."/>
            <person name="Oliver K."/>
            <person name="Palmeiri A."/>
            <person name="Palmer S.A."/>
            <person name="Parker A."/>
            <person name="Patel D."/>
            <person name="Pearce A.V."/>
            <person name="Peck A.I."/>
            <person name="Pelan S."/>
            <person name="Phelps K."/>
            <person name="Phillimore B.J."/>
            <person name="Plumb R."/>
            <person name="Rajan J."/>
            <person name="Raymond C."/>
            <person name="Rouse G."/>
            <person name="Saenphimmachak C."/>
            <person name="Sehra H.K."/>
            <person name="Sheridan E."/>
            <person name="Shownkeen R."/>
            <person name="Sims S."/>
            <person name="Skuce C.D."/>
            <person name="Smith M."/>
            <person name="Steward C."/>
            <person name="Subramanian S."/>
            <person name="Sycamore N."/>
            <person name="Tracey A."/>
            <person name="Tromans A."/>
            <person name="Van Helmond Z."/>
            <person name="Wall M."/>
            <person name="Wallis J.M."/>
            <person name="White S."/>
            <person name="Whitehead S.L."/>
            <person name="Wilkinson J.E."/>
            <person name="Willey D.L."/>
            <person name="Williams H."/>
            <person name="Wilming L."/>
            <person name="Wray P.W."/>
            <person name="Wu Z."/>
            <person name="Coulson A."/>
            <person name="Vaudin M."/>
            <person name="Sulston J.E."/>
            <person name="Durbin R.M."/>
            <person name="Hubbard T."/>
            <person name="Wooster R."/>
            <person name="Dunham I."/>
            <person name="Carter N.P."/>
            <person name="McVean G."/>
            <person name="Ross M.T."/>
            <person name="Harrow J."/>
            <person name="Olson M.V."/>
            <person name="Beck S."/>
            <person name="Rogers J."/>
            <person name="Bentley D.R."/>
        </authorList>
    </citation>
    <scope>NUCLEOTIDE SEQUENCE [LARGE SCALE GENOMIC DNA]</scope>
</reference>
<reference key="8">
    <citation type="submission" date="2005-07" db="EMBL/GenBank/DDBJ databases">
        <authorList>
            <person name="Mural R.J."/>
            <person name="Istrail S."/>
            <person name="Sutton G.G."/>
            <person name="Florea L."/>
            <person name="Halpern A.L."/>
            <person name="Mobarry C.M."/>
            <person name="Lippert R."/>
            <person name="Walenz B."/>
            <person name="Shatkay H."/>
            <person name="Dew I."/>
            <person name="Miller J.R."/>
            <person name="Flanigan M.J."/>
            <person name="Edwards N.J."/>
            <person name="Bolanos R."/>
            <person name="Fasulo D."/>
            <person name="Halldorsson B.V."/>
            <person name="Hannenhalli S."/>
            <person name="Turner R."/>
            <person name="Yooseph S."/>
            <person name="Lu F."/>
            <person name="Nusskern D.R."/>
            <person name="Shue B.C."/>
            <person name="Zheng X.H."/>
            <person name="Zhong F."/>
            <person name="Delcher A.L."/>
            <person name="Huson D.H."/>
            <person name="Kravitz S.A."/>
            <person name="Mouchard L."/>
            <person name="Reinert K."/>
            <person name="Remington K.A."/>
            <person name="Clark A.G."/>
            <person name="Waterman M.S."/>
            <person name="Eichler E.E."/>
            <person name="Adams M.D."/>
            <person name="Hunkapiller M.W."/>
            <person name="Myers E.W."/>
            <person name="Venter J.C."/>
        </authorList>
    </citation>
    <scope>NUCLEOTIDE SEQUENCE [LARGE SCALE GENOMIC DNA]</scope>
</reference>
<reference key="9">
    <citation type="journal article" date="2004" name="Genome Res.">
        <title>The status, quality, and expansion of the NIH full-length cDNA project: the Mammalian Gene Collection (MGC).</title>
        <authorList>
            <consortium name="The MGC Project Team"/>
        </authorList>
    </citation>
    <scope>NUCLEOTIDE SEQUENCE [LARGE SCALE MRNA] (ISOFORM 2)</scope>
</reference>
<reference key="10">
    <citation type="journal article" date="1998" name="Biochem. J.">
        <title>Activation of protein kinase B beta and gamma isoforms by insulin in vivo and by 3-phosphoinositide-dependent protein kinase-1 in vitro: comparison with protein kinase B alpha.</title>
        <authorList>
            <person name="Walker K.S."/>
            <person name="Deak M."/>
            <person name="Paterson A."/>
            <person name="Hudson K."/>
            <person name="Cohen P."/>
            <person name="Alessi D.R."/>
        </authorList>
    </citation>
    <scope>CHARACTERIZATION</scope>
    <scope>PHOSPHORYLATION AT THR-305 BY PDPK1</scope>
</reference>
<reference key="11">
    <citation type="journal article" date="2002" name="Biochemistry">
        <title>Characterization of PDK2 activity against protein kinase B gamma.</title>
        <authorList>
            <person name="Hodgkinson C.P."/>
            <person name="Sale E.M."/>
            <person name="Sale G.J."/>
        </authorList>
    </citation>
    <scope>PHOSPHORYLATION AT SER-472</scope>
</reference>
<reference key="12">
    <citation type="journal article" date="2002" name="J. Biol. Chem.">
        <title>Differential regulation of Akt kinase isoforms by the members of the TCL1 oncogene family.</title>
        <authorList>
            <person name="Laine J."/>
            <person name="Kuenstle G."/>
            <person name="Obata T."/>
            <person name="Noguchi M."/>
        </authorList>
    </citation>
    <scope>INTERACTION WITH TCL1A</scope>
</reference>
<reference key="13">
    <citation type="journal article" date="2002" name="Mol. Cell. Biol.">
        <title>Identification of Akt association and oligomerization domains of the Akt kinase coactivator TCL1.</title>
        <authorList>
            <person name="Kuenstle G."/>
            <person name="Laine J."/>
            <person name="Pierron G."/>
            <person name="Kagami S."/>
            <person name="Nakajima H."/>
            <person name="Hoh F."/>
            <person name="Roumestand C."/>
            <person name="Stern M.H."/>
            <person name="Noguchi M."/>
        </authorList>
    </citation>
    <scope>INTERACTION WITH TCL1A</scope>
</reference>
<reference key="14">
    <citation type="journal article" date="2004" name="Cancer Res.">
        <title>Deregulated Akt3 activity promotes development of malignant melanoma.</title>
        <authorList>
            <person name="Stahl J.M."/>
            <person name="Sharma A."/>
            <person name="Cheung M."/>
            <person name="Zimmerman M."/>
            <person name="Cheng J.Q."/>
            <person name="Bosenberg M.W."/>
            <person name="Kester M."/>
            <person name="Sandirasegarane L."/>
            <person name="Robertson G.P."/>
        </authorList>
    </citation>
    <scope>INVOLVEMENT IN TUMORS</scope>
</reference>
<reference key="15">
    <citation type="journal article" date="2006" name="Cancer Res.">
        <title>A specific role for AKT3 in the genesis of ovarian cancer through modulation of G(2)-M phase transition.</title>
        <authorList>
            <person name="Cristiano B.E."/>
            <person name="Chan J.C."/>
            <person name="Hannan K.M."/>
            <person name="Lundie N.A."/>
            <person name="Marmy-Conus N.J."/>
            <person name="Campbell I.G."/>
            <person name="Phillips W.A."/>
            <person name="Robbie M."/>
            <person name="Hannan R.D."/>
            <person name="Pearson R.B."/>
        </authorList>
    </citation>
    <scope>INVOLVEMENT IN CANCER</scope>
</reference>
<reference key="16">
    <citation type="journal article" date="2006" name="J. Biol. Chem.">
        <title>Kinetic mechanism of AKT/PKB enzyme family.</title>
        <authorList>
            <person name="Zhang X."/>
            <person name="Zhang S."/>
            <person name="Yamane H."/>
            <person name="Wahl R."/>
            <person name="Ali A."/>
            <person name="Lofgren J.A."/>
            <person name="Kendall R.L."/>
        </authorList>
    </citation>
    <scope>BIOPHYSICOCHEMICAL PROPERTIES</scope>
</reference>
<reference key="17">
    <citation type="journal article" date="2007" name="Science">
        <title>ATM and ATR substrate analysis reveals extensive protein networks responsive to DNA damage.</title>
        <authorList>
            <person name="Matsuoka S."/>
            <person name="Ballif B.A."/>
            <person name="Smogorzewska A."/>
            <person name="McDonald E.R. III"/>
            <person name="Hurov K.E."/>
            <person name="Luo J."/>
            <person name="Bakalarski C.E."/>
            <person name="Zhao Z."/>
            <person name="Solimini N."/>
            <person name="Lerenthal Y."/>
            <person name="Shiloh Y."/>
            <person name="Gygi S.P."/>
            <person name="Elledge S.J."/>
        </authorList>
    </citation>
    <scope>IDENTIFICATION BY MASS SPECTROMETRY [LARGE SCALE ANALYSIS]</scope>
    <source>
        <tissue>Embryonic kidney</tissue>
    </source>
</reference>
<reference key="18">
    <citation type="journal article" date="2008" name="FASEB J.">
        <title>VEGF stimulation of mitochondrial biogenesis: requirement of AKT3 kinase.</title>
        <authorList>
            <person name="Wright G.L."/>
            <person name="Maroulakou I.G."/>
            <person name="Eldridge J."/>
            <person name="Liby T.L."/>
            <person name="Sridharan V."/>
            <person name="Tsichlis P.N."/>
            <person name="Muise-Helmericks R.C."/>
        </authorList>
    </citation>
    <scope>FUNCTION</scope>
</reference>
<reference key="19">
    <citation type="journal article" date="2009" name="Anal. Chem.">
        <title>Lys-N and trypsin cover complementary parts of the phosphoproteome in a refined SCX-based approach.</title>
        <authorList>
            <person name="Gauci S."/>
            <person name="Helbig A.O."/>
            <person name="Slijper M."/>
            <person name="Krijgsveld J."/>
            <person name="Heck A.J."/>
            <person name="Mohammed S."/>
        </authorList>
    </citation>
    <scope>ACETYLATION [LARGE SCALE ANALYSIS] AT SER-2</scope>
    <scope>CLEAVAGE OF INITIATOR METHIONINE [LARGE SCALE ANALYSIS]</scope>
    <scope>IDENTIFICATION BY MASS SPECTROMETRY [LARGE SCALE ANALYSIS]</scope>
</reference>
<reference key="20">
    <citation type="journal article" date="2009" name="Dev. Cell">
        <title>The E3 ligase TTC3 facilitates ubiquitination and degradation of phosphorylated Akt.</title>
        <authorList>
            <person name="Suizu F."/>
            <person name="Hiramuki Y."/>
            <person name="Okumura F."/>
            <person name="Matsuda M."/>
            <person name="Okumura A.J."/>
            <person name="Hirata N."/>
            <person name="Narita M."/>
            <person name="Kohno T."/>
            <person name="Yokota J."/>
            <person name="Bohgaki M."/>
            <person name="Obuse C."/>
            <person name="Hatakeyama S."/>
            <person name="Obata T."/>
            <person name="Noguchi M."/>
        </authorList>
    </citation>
    <scope>UBIQUITINATION BY TTC3</scope>
</reference>
<reference key="21">
    <citation type="journal article" date="2009" name="Science">
        <title>The E3 ligase TRAF6 regulates Akt ubiquitination and activation.</title>
        <authorList>
            <person name="Yang W.-L."/>
            <person name="Wang J."/>
            <person name="Chan C.-H."/>
            <person name="Lee S.-W."/>
            <person name="Campos A.D."/>
            <person name="Lamothe B."/>
            <person name="Hur L."/>
            <person name="Grabiner B.C."/>
            <person name="Lin X."/>
            <person name="Darnay B.G."/>
            <person name="Lin H.-K."/>
        </authorList>
    </citation>
    <scope>INTERACTION WITH TRAF6</scope>
</reference>
<reference key="22">
    <citation type="journal article" date="2010" name="Am. J. Physiol.">
        <title>The Akt isoforms are present at distinct subcellular locations.</title>
        <authorList>
            <person name="Santi S.A."/>
            <person name="Lee H."/>
        </authorList>
    </citation>
    <scope>SUBCELLULAR LOCATION</scope>
</reference>
<reference key="23">
    <citation type="journal article" date="2010" name="Neuro-oncol.">
        <title>Akt2 and Akt3 play a pivotal role in malignant gliomas.</title>
        <authorList>
            <person name="Mure H."/>
            <person name="Matsuzaki K."/>
            <person name="Kitazato K.T."/>
            <person name="Mizobuchi Y."/>
            <person name="Kuwayama K."/>
            <person name="Kageji T."/>
            <person name="Nagahiro S."/>
        </authorList>
    </citation>
    <scope>INVOLVEMENT IN TUMORS</scope>
</reference>
<reference key="24">
    <citation type="journal article" date="2011" name="BMC Syst. Biol.">
        <title>Initial characterization of the human central proteome.</title>
        <authorList>
            <person name="Burkard T.R."/>
            <person name="Planyavsky M."/>
            <person name="Kaupe I."/>
            <person name="Breitwieser F.P."/>
            <person name="Buerckstuemmer T."/>
            <person name="Bennett K.L."/>
            <person name="Superti-Furga G."/>
            <person name="Colinge J."/>
        </authorList>
    </citation>
    <scope>IDENTIFICATION BY MASS SPECTROMETRY [LARGE SCALE ANALYSIS]</scope>
</reference>
<reference key="25">
    <citation type="journal article" date="2011" name="J. Invest. Dermatol.">
        <title>Expression of matrix metalloproteinase-13 is controlled by IL-13 via PI3K/Akt3 and PKC-delta in normal human dermal fibroblasts.</title>
        <authorList>
            <person name="Moriya C."/>
            <person name="Jinnin M."/>
            <person name="Yamane K."/>
            <person name="Maruo K."/>
            <person name="Muchemwa F.C."/>
            <person name="Igata T."/>
            <person name="Makino T."/>
            <person name="Fukushima S."/>
            <person name="Ihn H."/>
        </authorList>
    </citation>
    <scope>FUNCTION</scope>
</reference>
<reference key="26">
    <citation type="journal article" date="2011" name="Cell. Signal.">
        <title>Akt signalling in health and disease.</title>
        <authorList>
            <person name="Hers I."/>
            <person name="Vincent E.E."/>
            <person name="Tavare J.M."/>
        </authorList>
    </citation>
    <scope>REVIEW ON FUNCTION</scope>
</reference>
<reference key="27">
    <citation type="journal article" date="2014" name="J. Proteomics">
        <title>An enzyme assisted RP-RPLC approach for in-depth analysis of human liver phosphoproteome.</title>
        <authorList>
            <person name="Bian Y."/>
            <person name="Song C."/>
            <person name="Cheng K."/>
            <person name="Dong M."/>
            <person name="Wang F."/>
            <person name="Huang J."/>
            <person name="Sun D."/>
            <person name="Wang L."/>
            <person name="Ye M."/>
            <person name="Zou H."/>
        </authorList>
    </citation>
    <scope>PHOSPHORYLATION [LARGE SCALE ANALYSIS] AT THR-447</scope>
    <scope>IDENTIFICATION BY MASS SPECTROMETRY [LARGE SCALE ANALYSIS]</scope>
    <source>
        <tissue>Liver</tissue>
    </source>
</reference>
<reference key="28">
    <citation type="submission" date="2009-12" db="PDB data bank">
        <title>The crystal structure of the PH domain of human Akt3 protein kinase.</title>
        <authorList>
            <person name="Vollmar M."/>
            <person name="Wang J."/>
            <person name="Zhang Y."/>
            <person name="Elkins J.M."/>
            <person name="Burgess-Brown N."/>
            <person name="Chaikuad A."/>
            <person name="Pike A.C.W."/>
            <person name="Von Delft F."/>
            <person name="Bountra C."/>
            <person name="Arrowsmith C.H."/>
            <person name="Weigelt J."/>
            <person name="Edwards A."/>
            <person name="Knapp S."/>
        </authorList>
    </citation>
    <scope>X-RAY CRYSTALLOGRAPHY (1.46 ANGSTROMS) OF 1-118</scope>
</reference>
<reference key="29">
    <citation type="journal article" date="2007" name="Nature">
        <title>Patterns of somatic mutation in human cancer genomes.</title>
        <authorList>
            <person name="Greenman C."/>
            <person name="Stephens P."/>
            <person name="Smith R."/>
            <person name="Dalgliesh G.L."/>
            <person name="Hunter C."/>
            <person name="Bignell G."/>
            <person name="Davies H."/>
            <person name="Teague J."/>
            <person name="Butler A."/>
            <person name="Stevens C."/>
            <person name="Edkins S."/>
            <person name="O'Meara S."/>
            <person name="Vastrik I."/>
            <person name="Schmidt E.E."/>
            <person name="Avis T."/>
            <person name="Barthorpe S."/>
            <person name="Bhamra G."/>
            <person name="Buck G."/>
            <person name="Choudhury B."/>
            <person name="Clements J."/>
            <person name="Cole J."/>
            <person name="Dicks E."/>
            <person name="Forbes S."/>
            <person name="Gray K."/>
            <person name="Halliday K."/>
            <person name="Harrison R."/>
            <person name="Hills K."/>
            <person name="Hinton J."/>
            <person name="Jenkinson A."/>
            <person name="Jones D."/>
            <person name="Menzies A."/>
            <person name="Mironenko T."/>
            <person name="Perry J."/>
            <person name="Raine K."/>
            <person name="Richardson D."/>
            <person name="Shepherd R."/>
            <person name="Small A."/>
            <person name="Tofts C."/>
            <person name="Varian J."/>
            <person name="Webb T."/>
            <person name="West S."/>
            <person name="Widaa S."/>
            <person name="Yates A."/>
            <person name="Cahill D.P."/>
            <person name="Louis D.N."/>
            <person name="Goldstraw P."/>
            <person name="Nicholson A.G."/>
            <person name="Brasseur F."/>
            <person name="Looijenga L."/>
            <person name="Weber B.L."/>
            <person name="Chiew Y.-E."/>
            <person name="DeFazio A."/>
            <person name="Greaves M.F."/>
            <person name="Green A.R."/>
            <person name="Campbell P."/>
            <person name="Birney E."/>
            <person name="Easton D.F."/>
            <person name="Chenevix-Trench G."/>
            <person name="Tan M.-H."/>
            <person name="Khoo S.K."/>
            <person name="Teh B.T."/>
            <person name="Yuen S.T."/>
            <person name="Leung S.Y."/>
            <person name="Wooster R."/>
            <person name="Futreal P.A."/>
            <person name="Stratton M.R."/>
        </authorList>
    </citation>
    <scope>VARIANT [LARGE SCALE ANALYSIS] ARG-171</scope>
</reference>
<reference key="30">
    <citation type="journal article" date="2008" name="Br. J. Cancer">
        <title>A novel AKT3 mutation in melanoma tumours and cell lines.</title>
        <authorList>
            <person name="Davies M.A."/>
            <person name="Stemke-Hale K."/>
            <person name="Tellez C."/>
            <person name="Calderone T.L."/>
            <person name="Deng W."/>
            <person name="Prieto V.G."/>
            <person name="Lazar A.J."/>
            <person name="Gershenwald J.E."/>
            <person name="Mills G.B."/>
        </authorList>
    </citation>
    <scope>VARIANT MELANOMA LYS-17</scope>
    <scope>CHARACTERIZATION OF VARIANT MELANOMA LYS-17</scope>
</reference>
<reference key="31">
    <citation type="journal article" date="2012" name="Nat. Genet.">
        <title>De novo germline and postzygotic mutations in AKT3, PIK3R2 and PIK3CA cause a spectrum of related megalencephaly syndromes.</title>
        <authorList>
            <person name="Riviere J.B."/>
            <person name="Mirzaa G.M."/>
            <person name="O'Roak B.J."/>
            <person name="Beddaoui M."/>
            <person name="Alcantara D."/>
            <person name="Conway R.L."/>
            <person name="St-Onge J."/>
            <person name="Schwartzentruber J.A."/>
            <person name="Gripp K.W."/>
            <person name="Nikkel S.M."/>
            <person name="Worthylake T."/>
            <person name="Sullivan C.T."/>
            <person name="Ward T.R."/>
            <person name="Butler H.E."/>
            <person name="Kramer N.A."/>
            <person name="Albrecht B."/>
            <person name="Armour C.M."/>
            <person name="Armstrong L."/>
            <person name="Caluseriu O."/>
            <person name="Cytrynbaum C."/>
            <person name="Drolet B.A."/>
            <person name="Innes A.M."/>
            <person name="Lauzon J.L."/>
            <person name="Lin A.E."/>
            <person name="Mancini G.M."/>
            <person name="Meschino W.S."/>
            <person name="Reggin J.D."/>
            <person name="Saggar A.K."/>
            <person name="Lerman-Sagie T."/>
            <person name="Uyanik G."/>
            <person name="Weksberg R."/>
            <person name="Zirn B."/>
            <person name="Beaulieu C.L."/>
            <person name="Majewski J."/>
            <person name="Bulman D.E."/>
            <person name="O'Driscoll M."/>
            <person name="Shendure J."/>
            <person name="Graham J.M. Jr."/>
            <person name="Boycott K.M."/>
            <person name="Dobyns W.B."/>
        </authorList>
    </citation>
    <scope>VARIANTS MPPH2 SER-229 AND TRP-465</scope>
</reference>
<reference key="32">
    <citation type="journal article" date="2012" name="Nat. Genet.">
        <title>De novo somatic mutations in components of the PI3K-AKT3-mTOR pathway cause hemimegalencephaly.</title>
        <authorList>
            <person name="Lee J.H."/>
            <person name="Huynh M."/>
            <person name="Silhavy J.L."/>
            <person name="Kim S."/>
            <person name="Dixon-Salazar T."/>
            <person name="Heiberg A."/>
            <person name="Scott E."/>
            <person name="Bafna V."/>
            <person name="Hill K.J."/>
            <person name="Collazo A."/>
            <person name="Funari V."/>
            <person name="Russ C."/>
            <person name="Gabriel S.B."/>
            <person name="Mathern G.W."/>
            <person name="Gleeson J.G."/>
        </authorList>
    </citation>
    <scope>VARIANT MPPH2 LYS-17</scope>
</reference>
<reference key="33">
    <citation type="journal article" date="2012" name="Neuron">
        <title>Somatic activation of AKT3 causes hemispheric developmental brain malformations.</title>
        <authorList>
            <person name="Poduri A."/>
            <person name="Evrony G.D."/>
            <person name="Cai X."/>
            <person name="Elhosary P.C."/>
            <person name="Beroukhim R."/>
            <person name="Lehtinen M.K."/>
            <person name="Hills L.B."/>
            <person name="Heinzen E.L."/>
            <person name="Hill A."/>
            <person name="Hill R.S."/>
            <person name="Barry B.J."/>
            <person name="Bourgeois B.F."/>
            <person name="Riviello J.J."/>
            <person name="Barkovich A.J."/>
            <person name="Black P.M."/>
            <person name="Ligon K.L."/>
            <person name="Walsh C.A."/>
        </authorList>
    </citation>
    <scope>VARIANT MPPH2 LYS-17</scope>
</reference>
<reference key="34">
    <citation type="journal article" date="2014" name="Clin. Genet.">
        <title>AKT3 and PIK3R2 mutations in two patients with megalencephaly-related syndromes: MCAP and MPPH.</title>
        <authorList>
            <person name="Nakamura K."/>
            <person name="Kato M."/>
            <person name="Tohyama J."/>
            <person name="Shiohama T."/>
            <person name="Hayasaka K."/>
            <person name="Nishiyama K."/>
            <person name="Kodera H."/>
            <person name="Nakashima M."/>
            <person name="Tsurusaki Y."/>
            <person name="Miyake N."/>
            <person name="Matsumoto N."/>
            <person name="Saitsu H."/>
        </authorList>
    </citation>
    <scope>VARIANT MPPH2 SER-229</scope>
</reference>
<organism>
    <name type="scientific">Homo sapiens</name>
    <name type="common">Human</name>
    <dbReference type="NCBI Taxonomy" id="9606"/>
    <lineage>
        <taxon>Eukaryota</taxon>
        <taxon>Metazoa</taxon>
        <taxon>Chordata</taxon>
        <taxon>Craniata</taxon>
        <taxon>Vertebrata</taxon>
        <taxon>Euteleostomi</taxon>
        <taxon>Mammalia</taxon>
        <taxon>Eutheria</taxon>
        <taxon>Euarchontoglires</taxon>
        <taxon>Primates</taxon>
        <taxon>Haplorrhini</taxon>
        <taxon>Catarrhini</taxon>
        <taxon>Hominidae</taxon>
        <taxon>Homo</taxon>
    </lineage>
</organism>
<comment type="function">
    <text evidence="19 24">AKT3 is one of 3 closely related serine/threonine-protein kinases (AKT1, AKT2 and AKT3) called the AKT kinase, and which regulate many processes including metabolism, proliferation, cell survival, growth and angiogenesis. This is mediated through serine and/or threonine phosphorylation of a range of downstream substrates. Over 100 substrate candidates have been reported so far, but for most of them, no isoform specificity has been reported. AKT3 is the least studied AKT isoform. It plays an important role in brain development and is crucial for the viability of malignant glioma cells. AKT3 isoform may also be the key molecule in up-regulation and down-regulation of MMP13 via IL13. Required for the coordination of mitochondrial biogenesis with growth factor-induced increases in cellular energy demands. Down-regulation by RNA interference reduces the expression of the phosphorylated form of BAD, resulting in the induction of caspase-dependent apoptosis.</text>
</comment>
<comment type="catalytic activity">
    <reaction>
        <text>L-seryl-[protein] + ATP = O-phospho-L-seryl-[protein] + ADP + H(+)</text>
        <dbReference type="Rhea" id="RHEA:17989"/>
        <dbReference type="Rhea" id="RHEA-COMP:9863"/>
        <dbReference type="Rhea" id="RHEA-COMP:11604"/>
        <dbReference type="ChEBI" id="CHEBI:15378"/>
        <dbReference type="ChEBI" id="CHEBI:29999"/>
        <dbReference type="ChEBI" id="CHEBI:30616"/>
        <dbReference type="ChEBI" id="CHEBI:83421"/>
        <dbReference type="ChEBI" id="CHEBI:456216"/>
        <dbReference type="EC" id="2.7.11.1"/>
    </reaction>
</comment>
<comment type="catalytic activity">
    <reaction>
        <text>L-threonyl-[protein] + ATP = O-phospho-L-threonyl-[protein] + ADP + H(+)</text>
        <dbReference type="Rhea" id="RHEA:46608"/>
        <dbReference type="Rhea" id="RHEA-COMP:11060"/>
        <dbReference type="Rhea" id="RHEA-COMP:11605"/>
        <dbReference type="ChEBI" id="CHEBI:15378"/>
        <dbReference type="ChEBI" id="CHEBI:30013"/>
        <dbReference type="ChEBI" id="CHEBI:30616"/>
        <dbReference type="ChEBI" id="CHEBI:61977"/>
        <dbReference type="ChEBI" id="CHEBI:456216"/>
        <dbReference type="EC" id="2.7.11.1"/>
    </reaction>
</comment>
<comment type="activity regulation">
    <text evidence="1">Two specific sites, one in the kinase domain (Thr-305) and the other in the C-terminal regulatory region (Ser-472), need to be phosphorylated for its full activation (By similarity). IGF-1 leads to the activation of AKT3, which may play a role in regulating cell survival.</text>
</comment>
<comment type="biophysicochemical properties">
    <kinetics>
        <KM evidence="17">87.9 uM for ATP (for purified and in vitro activated AKT3)</KM>
        <KM evidence="17">12.4 uM for peptide substrate (for purified and in vitro activated AKT3)</KM>
        <KM evidence="17">118.7 uM for ATP (for recombinant myristoylated AKT3 expressed and immunoprecipitated from Rat-1 cells)</KM>
        <KM evidence="17">2.3 uM for peptide substrate (for recombinant myristoylated AKT3 expressed and immunoprecipitated from Rat-1 cells)</KM>
    </kinetics>
</comment>
<comment type="subunit">
    <text evidence="6 14 15 21">Interacts (via PH domain) with TCL1A; this enhances AKT3 phosphorylation and activation. Interacts with TRAF6. Interacts with KCTD20 (By similarity). Interacts with BTBD10 (By similarity).</text>
</comment>
<comment type="interaction">
    <interactant intactId="EBI-296115">
        <id>Q9Y243</id>
    </interactant>
    <interactant intactId="EBI-524064">
        <id>P42574</id>
        <label>CASP3</label>
    </interactant>
    <organismsDiffer>false</organismsDiffer>
    <experiments>2</experiments>
</comment>
<comment type="interaction">
    <interactant intactId="EBI-296115">
        <id>Q9Y243</id>
    </interactant>
    <interactant intactId="EBI-295634">
        <id>Q16543</id>
        <label>CDC37</label>
    </interactant>
    <organismsDiffer>false</organismsDiffer>
    <experiments>5</experiments>
</comment>
<comment type="interaction">
    <interactant intactId="EBI-296115">
        <id>Q9Y243</id>
    </interactant>
    <interactant intactId="EBI-296047">
        <id>P07900</id>
        <label>HSP90AA1</label>
    </interactant>
    <organismsDiffer>false</organismsDiffer>
    <experiments>4</experiments>
</comment>
<comment type="interaction">
    <interactant intactId="EBI-296115">
        <id>Q9Y243</id>
    </interactant>
    <interactant intactId="EBI-2681313">
        <id>P53804</id>
        <label>TTC3</label>
    </interactant>
    <organismsDiffer>false</organismsDiffer>
    <experiments>2</experiments>
</comment>
<comment type="subcellular location">
    <subcellularLocation>
        <location evidence="22">Nucleus</location>
    </subcellularLocation>
    <subcellularLocation>
        <location evidence="22">Cytoplasm</location>
    </subcellularLocation>
    <subcellularLocation>
        <location evidence="22">Membrane</location>
        <topology evidence="22">Peripheral membrane protein</topology>
    </subcellularLocation>
    <text>Membrane-associated after cell stimulation leading to its translocation.</text>
</comment>
<comment type="alternative products">
    <event type="alternative splicing"/>
    <isoform>
        <id>Q9Y243-1</id>
        <name>1</name>
        <name>PKB gamma</name>
        <sequence type="displayed"/>
    </isoform>
    <isoform>
        <id>Q9Y243-2</id>
        <name>2</name>
        <name>PKB gamma 1</name>
        <sequence type="described" ref="VSP_004947"/>
    </isoform>
</comment>
<comment type="tissue specificity">
    <text>In adult tissues, it is highly expressed in brain, lung and kidney, but weakly in heart, testis and liver. In fetal tissues, it is highly expressed in heart, liver and brain and not at all in kidney.</text>
</comment>
<comment type="domain">
    <text>Binding of the PH domain to the phosphatidylinositol 3-kinase alpha (PI(3)K) results in its targeting to the plasma membrane.</text>
</comment>
<comment type="PTM">
    <text evidence="5 16 29">Phosphorylation on Thr-305 and Ser-472 is required for full activity (PubMed:12162751, PubMed:9512493). Phosphorylation of the activation loop at Thr-305 by PDPK1/PDK1 is a prerequisite for full activation (PubMed:9512493). Phosphorylation at Ser-472 by mTORC2 in response to growth factors plays a key role in AKT1 activation by facilitating subsequent phosphorylation of the activation loop by PDPK1/PDK1 (By similarity).</text>
</comment>
<comment type="PTM">
    <text evidence="16 23 29">Ubiquitinated. When fully phosphorylated and translocated into the nucleus, undergoes 'Lys-48'-polyubiquitination catalyzed by TTC3, leading to its degradation by the proteasome.</text>
</comment>
<comment type="PTM">
    <text evidence="2">O-GlcNAcylation at Thr-302 and Thr-309 inhibits activating phosphorylation at Thr-305 via disrupting the interaction between AKT and PDPK1/PDK1.</text>
</comment>
<comment type="disease">
    <text>AKT3 is a key modulator of several tumors like melanoma, glioma and ovarian cancer. Active AKT3 increases progressively during melanoma tumor progression with highest levels present in advanced-stage metastatic melanomas. Promotes melanoma tumorigenesis by decreasing apoptosis. Plays a key role in the genesis of ovarian cancers through modulation of G2/M phase transition. With AKT2, plays a pivotal role in the biology of glioblastoma.</text>
</comment>
<comment type="disease" evidence="25 26 27 28">
    <disease id="DI-04183">
        <name>Megalencephaly-polymicrogyria-polydactyly-hydrocephalus syndrome 2</name>
        <acronym>MPPH2</acronym>
        <description>A syndrome characterized by megalencephaly, hydrocephalus, and polymicrogyria; polydactyly may also be seen. There is considerable phenotypic similarity between this disorder and the megalencephaly-capillary malformation syndrome.</description>
        <dbReference type="MIM" id="615937"/>
    </disease>
    <text>The disease is caused by variants affecting the gene represented in this entry.</text>
</comment>
<comment type="similarity">
    <text evidence="33">Belongs to the protein kinase superfamily. AGC Ser/Thr protein kinase family. RAC subfamily.</text>
</comment>
<comment type="caution">
    <text evidence="33">In light of strong homologies in the primary amino acid sequence, the 3 AKT kinases were long surmised to play redundant and overlapping roles. More recent studies has brought into question the redundancy within AKT kinase isoforms and instead pointed to isoform specific functions in different cellular events and diseases. AKT1 is more specifically involved in cellular survival pathways, by inhibiting apoptotic processes; whereas AKT2 is more specific for the insulin receptor signaling pathway. Moreover, while AKT1 and AKT2 are often implicated in many aspects of cellular transformation, the 2 isoforms act in a complementary opposing manner. The role of AKT3 is less clear, though it appears to be predominantly expressed in brain.</text>
</comment>
<comment type="online information" name="Atlas of Genetics and Cytogenetics in Oncology and Haematology">
    <link uri="https://atlasgeneticsoncology.org/gene/615/AKT3"/>
</comment>
<keyword id="KW-0002">3D-structure</keyword>
<keyword id="KW-0007">Acetylation</keyword>
<keyword id="KW-0025">Alternative splicing</keyword>
<keyword id="KW-0067">ATP-binding</keyword>
<keyword id="KW-0963">Cytoplasm</keyword>
<keyword id="KW-0225">Disease variant</keyword>
<keyword id="KW-1015">Disulfide bond</keyword>
<keyword id="KW-0325">Glycoprotein</keyword>
<keyword id="KW-0418">Kinase</keyword>
<keyword id="KW-0472">Membrane</keyword>
<keyword id="KW-0547">Nucleotide-binding</keyword>
<keyword id="KW-0539">Nucleus</keyword>
<keyword id="KW-0597">Phosphoprotein</keyword>
<keyword id="KW-1267">Proteomics identification</keyword>
<keyword id="KW-1185">Reference proteome</keyword>
<keyword id="KW-0723">Serine/threonine-protein kinase</keyword>
<keyword id="KW-0808">Transferase</keyword>
<keyword id="KW-0832">Ubl conjugation</keyword>
<feature type="initiator methionine" description="Removed" evidence="34">
    <location>
        <position position="1"/>
    </location>
</feature>
<feature type="chain" id="PRO_0000085611" description="RAC-gamma serine/threonine-protein kinase">
    <location>
        <begin position="2"/>
        <end position="479"/>
    </location>
</feature>
<feature type="domain" description="PH" evidence="7">
    <location>
        <begin position="5"/>
        <end position="107"/>
    </location>
</feature>
<feature type="domain" description="Protein kinase" evidence="8">
    <location>
        <begin position="148"/>
        <end position="405"/>
    </location>
</feature>
<feature type="domain" description="AGC-kinase C-terminal" evidence="9">
    <location>
        <begin position="406"/>
        <end position="479"/>
    </location>
</feature>
<feature type="region of interest" description="Disordered" evidence="11">
    <location>
        <begin position="458"/>
        <end position="479"/>
    </location>
</feature>
<feature type="active site" description="Proton acceptor" evidence="8 10">
    <location>
        <position position="271"/>
    </location>
</feature>
<feature type="binding site" evidence="8">
    <location>
        <begin position="154"/>
        <end position="162"/>
    </location>
    <ligand>
        <name>ATP</name>
        <dbReference type="ChEBI" id="CHEBI:30616"/>
    </ligand>
</feature>
<feature type="binding site" evidence="8">
    <location>
        <position position="177"/>
    </location>
    <ligand>
        <name>ATP</name>
        <dbReference type="ChEBI" id="CHEBI:30616"/>
    </ligand>
</feature>
<feature type="modified residue" description="N-acetylserine" evidence="34">
    <location>
        <position position="2"/>
    </location>
</feature>
<feature type="modified residue" description="Phosphothreonine; by PDPK1" evidence="29">
    <location>
        <position position="305"/>
    </location>
</feature>
<feature type="modified residue" description="Phosphothreonine" evidence="35">
    <location>
        <position position="447"/>
    </location>
</feature>
<feature type="modified residue" description="Phosphoserine; by PKC/PRKCZ" evidence="16">
    <location>
        <position position="472"/>
    </location>
</feature>
<feature type="glycosylation site" description="O-linked (GlcNAc) threonine" evidence="2">
    <location>
        <position position="302"/>
    </location>
</feature>
<feature type="glycosylation site" description="O-linked (GlcNAc) threonine" evidence="2">
    <location>
        <position position="309"/>
    </location>
</feature>
<feature type="glycosylation site" description="O-linked (GlcNAc) serine; alternate" evidence="3">
    <location>
        <position position="472"/>
    </location>
</feature>
<feature type="disulfide bond" evidence="2">
    <location>
        <begin position="59"/>
        <end position="76"/>
    </location>
</feature>
<feature type="disulfide bond" evidence="4">
    <location>
        <begin position="293"/>
        <end position="307"/>
    </location>
</feature>
<feature type="splice variant" id="VSP_004947" description="In isoform 2." evidence="30 31 32">
    <original>YDEDGMDCMDNERRPHFPQFSYSASGRE</original>
    <variation>CQQSDCGMLGNWKK</variation>
    <location>
        <begin position="452"/>
        <end position="479"/>
    </location>
</feature>
<feature type="sequence variant" id="VAR_065830" description="In MPPH2 and melanoma; results in activation of AKT; dbSNP:rs397514606." evidence="20 25 26">
    <original>E</original>
    <variation>K</variation>
    <location>
        <position position="17"/>
    </location>
</feature>
<feature type="sequence variant" id="VAR_040358" description="In a glioblastoma multiforme sample; somatic mutation; dbSNP:rs1402272180." evidence="18">
    <original>G</original>
    <variation>R</variation>
    <location>
        <position position="171"/>
    </location>
</feature>
<feature type="sequence variant" id="VAR_069260" description="In MPPH2; dbSNP:rs397514605." evidence="27 28">
    <original>N</original>
    <variation>S</variation>
    <location>
        <position position="229"/>
    </location>
</feature>
<feature type="sequence variant" id="VAR_069261" description="In MPPH2; disease phenotype overlaps with megalencephaly-capillary malformation syndrome; dbSNP:rs587776935." evidence="27">
    <original>R</original>
    <variation>W</variation>
    <location>
        <position position="465"/>
    </location>
</feature>
<feature type="mutagenesis site" description="No activation after pervanadate treatment." evidence="13">
    <original>T</original>
    <variation>A</variation>
    <location>
        <position position="305"/>
    </location>
</feature>
<feature type="mutagenesis site" description="2-fold increase of phosphorylation steady state level, no activation after pervanadate treatment." evidence="13">
    <original>T</original>
    <variation>D</variation>
    <location>
        <position position="305"/>
    </location>
</feature>
<feature type="mutagenesis site" description="No effect." evidence="13">
    <original>T</original>
    <variation>A</variation>
    <location>
        <position position="447"/>
    </location>
</feature>
<feature type="mutagenesis site" description="No effect." evidence="13">
    <original>T</original>
    <variation>D</variation>
    <location>
        <position position="447"/>
    </location>
</feature>
<feature type="mutagenesis site" description="67% decrease of activity after pervanadate treatment." evidence="12">
    <original>S</original>
    <variation>A</variation>
    <location>
        <position position="472"/>
    </location>
</feature>
<feature type="mutagenesis site" description="1.4-fold increase of phosphorylation steady state level, 50% decrease of activity after pervanadate treatment." evidence="12">
    <original>S</original>
    <variation>D</variation>
    <location>
        <position position="472"/>
    </location>
</feature>
<feature type="sequence conflict" description="In Ref. 9; AAI21155." evidence="33" ref="9">
    <original>L</original>
    <variation>R</variation>
    <location>
        <position position="279"/>
    </location>
</feature>
<feature type="strand" evidence="36">
    <location>
        <begin position="6"/>
        <end position="15"/>
    </location>
</feature>
<feature type="strand" evidence="36">
    <location>
        <begin position="17"/>
        <end position="30"/>
    </location>
</feature>
<feature type="strand" evidence="36">
    <location>
        <begin position="33"/>
        <end position="41"/>
    </location>
</feature>
<feature type="helix" evidence="36">
    <location>
        <begin position="44"/>
        <end position="46"/>
    </location>
</feature>
<feature type="strand" evidence="36">
    <location>
        <begin position="51"/>
        <end position="55"/>
    </location>
</feature>
<feature type="strand" evidence="36">
    <location>
        <begin position="60"/>
        <end position="64"/>
    </location>
</feature>
<feature type="strand" evidence="36">
    <location>
        <begin position="66"/>
        <end position="68"/>
    </location>
</feature>
<feature type="strand" evidence="36">
    <location>
        <begin position="71"/>
        <end position="75"/>
    </location>
</feature>
<feature type="turn" evidence="36">
    <location>
        <begin position="80"/>
        <end position="82"/>
    </location>
</feature>
<feature type="strand" evidence="36">
    <location>
        <begin position="84"/>
        <end position="88"/>
    </location>
</feature>
<feature type="helix" evidence="36">
    <location>
        <begin position="92"/>
        <end position="113"/>
    </location>
</feature>
<feature type="helix" evidence="37">
    <location>
        <begin position="470"/>
        <end position="472"/>
    </location>
</feature>